<proteinExistence type="inferred from homology"/>
<gene>
    <name type="ordered locus">LBA0853</name>
</gene>
<dbReference type="EC" id="3.5.1.47" evidence="1"/>
<dbReference type="EMBL" id="CP000033">
    <property type="protein sequence ID" value="AAV42714.1"/>
    <property type="molecule type" value="Genomic_DNA"/>
</dbReference>
<dbReference type="RefSeq" id="WP_003546881.1">
    <property type="nucleotide sequence ID" value="NC_006814.3"/>
</dbReference>
<dbReference type="RefSeq" id="YP_193745.1">
    <property type="nucleotide sequence ID" value="NC_006814.3"/>
</dbReference>
<dbReference type="SMR" id="Q5FKR0"/>
<dbReference type="STRING" id="272621.LBA0853"/>
<dbReference type="KEGG" id="lac:LBA0853"/>
<dbReference type="PATRIC" id="fig|272621.13.peg.815"/>
<dbReference type="eggNOG" id="COG1473">
    <property type="taxonomic scope" value="Bacteria"/>
</dbReference>
<dbReference type="HOGENOM" id="CLU_023257_0_1_9"/>
<dbReference type="OrthoDB" id="9776731at2"/>
<dbReference type="BioCyc" id="LACI272621:G1G49-864-MONOMER"/>
<dbReference type="UniPathway" id="UPA00034">
    <property type="reaction ID" value="UER00024"/>
</dbReference>
<dbReference type="Proteomes" id="UP000006381">
    <property type="component" value="Chromosome"/>
</dbReference>
<dbReference type="GO" id="GO:0050118">
    <property type="term" value="F:N-acetyldiaminopimelate deacetylase activity"/>
    <property type="evidence" value="ECO:0007669"/>
    <property type="project" value="UniProtKB-UniRule"/>
</dbReference>
<dbReference type="GO" id="GO:0019877">
    <property type="term" value="P:diaminopimelate biosynthetic process"/>
    <property type="evidence" value="ECO:0007669"/>
    <property type="project" value="UniProtKB-UniRule"/>
</dbReference>
<dbReference type="GO" id="GO:0009089">
    <property type="term" value="P:lysine biosynthetic process via diaminopimelate"/>
    <property type="evidence" value="ECO:0007669"/>
    <property type="project" value="UniProtKB-UniRule"/>
</dbReference>
<dbReference type="CDD" id="cd05670">
    <property type="entry name" value="M20_Acy1_YkuR-like"/>
    <property type="match status" value="1"/>
</dbReference>
<dbReference type="FunFam" id="3.30.70.360:FF:000001">
    <property type="entry name" value="N-acetyldiaminopimelate deacetylase"/>
    <property type="match status" value="1"/>
</dbReference>
<dbReference type="Gene3D" id="3.30.70.360">
    <property type="match status" value="1"/>
</dbReference>
<dbReference type="Gene3D" id="3.40.630.10">
    <property type="entry name" value="Zn peptidases"/>
    <property type="match status" value="1"/>
</dbReference>
<dbReference type="HAMAP" id="MF_01692">
    <property type="entry name" value="DapEL"/>
    <property type="match status" value="1"/>
</dbReference>
<dbReference type="InterPro" id="IPR023905">
    <property type="entry name" value="AcetylDAP_deacetylase"/>
</dbReference>
<dbReference type="InterPro" id="IPR017439">
    <property type="entry name" value="Amidohydrolase"/>
</dbReference>
<dbReference type="InterPro" id="IPR036264">
    <property type="entry name" value="Bact_exopeptidase_dim_dom"/>
</dbReference>
<dbReference type="InterPro" id="IPR002933">
    <property type="entry name" value="Peptidase_M20"/>
</dbReference>
<dbReference type="InterPro" id="IPR011650">
    <property type="entry name" value="Peptidase_M20_dimer"/>
</dbReference>
<dbReference type="NCBIfam" id="TIGR01891">
    <property type="entry name" value="amidohydrolases"/>
    <property type="match status" value="1"/>
</dbReference>
<dbReference type="PANTHER" id="PTHR11014:SF98">
    <property type="entry name" value="N-ACETYLDIAMINOPIMELATE DEACETYLASE"/>
    <property type="match status" value="1"/>
</dbReference>
<dbReference type="PANTHER" id="PTHR11014">
    <property type="entry name" value="PEPTIDASE M20 FAMILY MEMBER"/>
    <property type="match status" value="1"/>
</dbReference>
<dbReference type="Pfam" id="PF07687">
    <property type="entry name" value="M20_dimer"/>
    <property type="match status" value="1"/>
</dbReference>
<dbReference type="Pfam" id="PF01546">
    <property type="entry name" value="Peptidase_M20"/>
    <property type="match status" value="1"/>
</dbReference>
<dbReference type="PIRSF" id="PIRSF005962">
    <property type="entry name" value="Pept_M20D_amidohydro"/>
    <property type="match status" value="1"/>
</dbReference>
<dbReference type="SUPFAM" id="SSF55031">
    <property type="entry name" value="Bacterial exopeptidase dimerisation domain"/>
    <property type="match status" value="1"/>
</dbReference>
<dbReference type="SUPFAM" id="SSF53187">
    <property type="entry name" value="Zn-dependent exopeptidases"/>
    <property type="match status" value="1"/>
</dbReference>
<keyword id="KW-0028">Amino-acid biosynthesis</keyword>
<keyword id="KW-0220">Diaminopimelate biosynthesis</keyword>
<keyword id="KW-0378">Hydrolase</keyword>
<keyword id="KW-0457">Lysine biosynthesis</keyword>
<keyword id="KW-1185">Reference proteome</keyword>
<name>DAPEL_LACAC</name>
<reference key="1">
    <citation type="journal article" date="2005" name="Proc. Natl. Acad. Sci. U.S.A.">
        <title>Complete genome sequence of the probiotic lactic acid bacterium Lactobacillus acidophilus NCFM.</title>
        <authorList>
            <person name="Altermann E."/>
            <person name="Russell W.M."/>
            <person name="Azcarate-Peril M.A."/>
            <person name="Barrangou R."/>
            <person name="Buck B.L."/>
            <person name="McAuliffe O."/>
            <person name="Souther N."/>
            <person name="Dobson A."/>
            <person name="Duong T."/>
            <person name="Callanan M."/>
            <person name="Lick S."/>
            <person name="Hamrick A."/>
            <person name="Cano R."/>
            <person name="Klaenhammer T.R."/>
        </authorList>
    </citation>
    <scope>NUCLEOTIDE SEQUENCE [LARGE SCALE GENOMIC DNA]</scope>
    <source>
        <strain>ATCC 700396 / NCK56 / N2 / NCFM</strain>
    </source>
</reference>
<organism>
    <name type="scientific">Lactobacillus acidophilus (strain ATCC 700396 / NCK56 / N2 / NCFM)</name>
    <dbReference type="NCBI Taxonomy" id="272621"/>
    <lineage>
        <taxon>Bacteria</taxon>
        <taxon>Bacillati</taxon>
        <taxon>Bacillota</taxon>
        <taxon>Bacilli</taxon>
        <taxon>Lactobacillales</taxon>
        <taxon>Lactobacillaceae</taxon>
        <taxon>Lactobacillus</taxon>
    </lineage>
</organism>
<accession>Q5FKR0</accession>
<comment type="function">
    <text evidence="1">Catalyzes the conversion of N-acetyl-diaminopimelate to diaminopimelate and acetate.</text>
</comment>
<comment type="catalytic activity">
    <reaction evidence="1">
        <text>N-acetyl-(2S,6S)-2,6-diaminopimelate + H2O = (2S,6S)-2,6-diaminopimelate + acetate</text>
        <dbReference type="Rhea" id="RHEA:20405"/>
        <dbReference type="ChEBI" id="CHEBI:15377"/>
        <dbReference type="ChEBI" id="CHEBI:30089"/>
        <dbReference type="ChEBI" id="CHEBI:57609"/>
        <dbReference type="ChEBI" id="CHEBI:58767"/>
        <dbReference type="EC" id="3.5.1.47"/>
    </reaction>
</comment>
<comment type="pathway">
    <text evidence="1">Amino-acid biosynthesis; L-lysine biosynthesis via DAP pathway; LL-2,6-diaminopimelate from (S)-tetrahydrodipicolinate (acetylase route): step 3/3.</text>
</comment>
<comment type="similarity">
    <text evidence="1">Belongs to the peptidase M20A family. N-acetyldiaminopimelate deacetylase subfamily.</text>
</comment>
<feature type="chain" id="PRO_0000376757" description="N-acetyldiaminopimelate deacetylase">
    <location>
        <begin position="1"/>
        <end position="383"/>
    </location>
</feature>
<feature type="active site" evidence="1">
    <location>
        <position position="75"/>
    </location>
</feature>
<feature type="active site" description="Proton acceptor" evidence="1">
    <location>
        <position position="134"/>
    </location>
</feature>
<protein>
    <recommendedName>
        <fullName evidence="1">N-acetyldiaminopimelate deacetylase</fullName>
        <ecNumber evidence="1">3.5.1.47</ecNumber>
    </recommendedName>
</protein>
<evidence type="ECO:0000255" key="1">
    <source>
        <dbReference type="HAMAP-Rule" id="MF_01692"/>
    </source>
</evidence>
<sequence>MTVLSEKELIQIRRHLHEIPELALQEKETHDYLLKVIKNLKQDHLTIVVPKTLPTAILGLVKGINPKKTIGYRTDIDALPVQEKTGLPFTSKHSGIMHACGHDIHMTVALGLLSYFSENQPKDNLLFFFQPAEESESGGKQAYEKGLFQGKFKPDEFYGLHDNPELPAGSIGCRMGTLFAGTTEINIDVIGKSGHAAFPQNANDTVVAAANLIMQIQTIISRSIDPIQSGVITLGKVNAGVIRNVIAGHTRIEGTIRGLTQKMILQIDRRLQDVCDGIAHSYNVEVNLELNQGGYWPVENDPKITKNFISYMKKNPKVNFIETEPKMTGEDFGFLLAKFPGTMFWLGVGDPSSQLHSSTLNPDEKSIQSGIDAIKGFLIDRMG</sequence>